<sequence>MAFLDNPLIILAHIRQSHVTSDDTGMCEMVLIDHDVDLEKLYQSSVSGENSTQMQSNGGETQGYVYSQSVDITSSWDFGIRRRSNTAQKLERLRKERQNQIKCKNVQWKDRNTSHSAEELSSLFERKNFKERALNQGKQSILSVRLEQCPLQLNNPFNEYSKFDGKGHVGTTATKKIDVYLSMQTSQDKLLPMTVVTIANAKVHDLIGLICWQYTTEGREPKLNDNVDAFCLHIAEDDGEVDTDFPPLDSNEPIHKFGFSTLALVEKYSSPGLAAKQSLFVRINAAHGFSLIQVDSTNVTMRDILEKALKRRKGSQRNSGPQYRLEKQSQPNVPVDLDSTLENQNSLEFCLVRENSSRGEEPPEEETQIDIATVQDMLSSHQYKSFKVSMIHRLRFTTDVQLGISGEKVEIDPVTNQKTSTKFWIKQKPISIDSDVLCACDLAEEKSPSHAMFKVTYLSNHDYKHLYFESDAATVNEIVLKVNYILESRASTARADYFAQKQRKLTRRTSFSFQKEKKPG</sequence>
<keyword id="KW-1003">Cell membrane</keyword>
<keyword id="KW-0963">Cytoplasm</keyword>
<keyword id="KW-0256">Endoplasmic reticulum</keyword>
<keyword id="KW-0967">Endosome</keyword>
<keyword id="KW-0333">Golgi apparatus</keyword>
<keyword id="KW-0458">Lysosome</keyword>
<keyword id="KW-0472">Membrane</keyword>
<keyword id="KW-0496">Mitochondrion</keyword>
<keyword id="KW-1000">Mitochondrion outer membrane</keyword>
<keyword id="KW-0539">Nucleus</keyword>
<keyword id="KW-1185">Reference proteome</keyword>
<dbReference type="EMBL" id="BC136078">
    <property type="protein sequence ID" value="AAI36079.1"/>
    <property type="molecule type" value="mRNA"/>
</dbReference>
<dbReference type="RefSeq" id="NP_001093676.1">
    <property type="nucleotide sequence ID" value="NM_001100206.1"/>
</dbReference>
<dbReference type="RefSeq" id="XP_012823294.1">
    <property type="nucleotide sequence ID" value="XM_012967840.3"/>
</dbReference>
<dbReference type="SMR" id="A4IIM3"/>
<dbReference type="FunCoup" id="A4IIM3">
    <property type="interactions" value="3925"/>
</dbReference>
<dbReference type="STRING" id="8364.ENSXETP00000034721"/>
<dbReference type="PaxDb" id="8364-ENSXETP00000061495"/>
<dbReference type="DNASU" id="100101680"/>
<dbReference type="GeneID" id="100101680"/>
<dbReference type="KEGG" id="xtr:100101680"/>
<dbReference type="AGR" id="Xenbase:XB-GENE-478752"/>
<dbReference type="CTD" id="79109"/>
<dbReference type="Xenbase" id="XB-GENE-478752">
    <property type="gene designation" value="mapkap1"/>
</dbReference>
<dbReference type="eggNOG" id="KOG3739">
    <property type="taxonomic scope" value="Eukaryota"/>
</dbReference>
<dbReference type="InParanoid" id="A4IIM3"/>
<dbReference type="OMA" id="NAKFWPQ"/>
<dbReference type="OrthoDB" id="241990at2759"/>
<dbReference type="Proteomes" id="UP000008143">
    <property type="component" value="Chromosome 8"/>
</dbReference>
<dbReference type="Bgee" id="ENSXETG00000000505">
    <property type="expression patterns" value="Expressed in skeletal muscle tissue and 14 other cell types or tissues"/>
</dbReference>
<dbReference type="GO" id="GO:0005769">
    <property type="term" value="C:early endosome"/>
    <property type="evidence" value="ECO:0000250"/>
    <property type="project" value="UniProtKB"/>
</dbReference>
<dbReference type="GO" id="GO:0031901">
    <property type="term" value="C:early endosome membrane"/>
    <property type="evidence" value="ECO:0007669"/>
    <property type="project" value="UniProtKB-SubCell"/>
</dbReference>
<dbReference type="GO" id="GO:0005783">
    <property type="term" value="C:endoplasmic reticulum"/>
    <property type="evidence" value="ECO:0000250"/>
    <property type="project" value="UniProtKB"/>
</dbReference>
<dbReference type="GO" id="GO:0005789">
    <property type="term" value="C:endoplasmic reticulum membrane"/>
    <property type="evidence" value="ECO:0007669"/>
    <property type="project" value="UniProtKB-SubCell"/>
</dbReference>
<dbReference type="GO" id="GO:0000139">
    <property type="term" value="C:Golgi membrane"/>
    <property type="evidence" value="ECO:0007669"/>
    <property type="project" value="UniProtKB-SubCell"/>
</dbReference>
<dbReference type="GO" id="GO:0005770">
    <property type="term" value="C:late endosome"/>
    <property type="evidence" value="ECO:0000250"/>
    <property type="project" value="UniProtKB"/>
</dbReference>
<dbReference type="GO" id="GO:0031902">
    <property type="term" value="C:late endosome membrane"/>
    <property type="evidence" value="ECO:0007669"/>
    <property type="project" value="UniProtKB-SubCell"/>
</dbReference>
<dbReference type="GO" id="GO:0005765">
    <property type="term" value="C:lysosomal membrane"/>
    <property type="evidence" value="ECO:0007669"/>
    <property type="project" value="UniProtKB-SubCell"/>
</dbReference>
<dbReference type="GO" id="GO:0005764">
    <property type="term" value="C:lysosome"/>
    <property type="evidence" value="ECO:0000250"/>
    <property type="project" value="UniProtKB"/>
</dbReference>
<dbReference type="GO" id="GO:0005741">
    <property type="term" value="C:mitochondrial outer membrane"/>
    <property type="evidence" value="ECO:0000250"/>
    <property type="project" value="UniProtKB"/>
</dbReference>
<dbReference type="GO" id="GO:0005634">
    <property type="term" value="C:nucleus"/>
    <property type="evidence" value="ECO:0007669"/>
    <property type="project" value="UniProtKB-SubCell"/>
</dbReference>
<dbReference type="GO" id="GO:0048471">
    <property type="term" value="C:perinuclear region of cytoplasm"/>
    <property type="evidence" value="ECO:0007669"/>
    <property type="project" value="UniProtKB-SubCell"/>
</dbReference>
<dbReference type="GO" id="GO:0005886">
    <property type="term" value="C:plasma membrane"/>
    <property type="evidence" value="ECO:0007669"/>
    <property type="project" value="UniProtKB-SubCell"/>
</dbReference>
<dbReference type="GO" id="GO:0031932">
    <property type="term" value="C:TORC2 complex"/>
    <property type="evidence" value="ECO:0000250"/>
    <property type="project" value="UniProtKB"/>
</dbReference>
<dbReference type="GO" id="GO:0140767">
    <property type="term" value="F:enzyme-substrate adaptor activity"/>
    <property type="evidence" value="ECO:0000250"/>
    <property type="project" value="UniProtKB"/>
</dbReference>
<dbReference type="GO" id="GO:0005547">
    <property type="term" value="F:phosphatidylinositol-3,4,5-trisphosphate binding"/>
    <property type="evidence" value="ECO:0000250"/>
    <property type="project" value="UniProtKB"/>
</dbReference>
<dbReference type="GO" id="GO:0038203">
    <property type="term" value="P:TORC2 signaling"/>
    <property type="evidence" value="ECO:0000250"/>
    <property type="project" value="UniProtKB"/>
</dbReference>
<dbReference type="CDD" id="cd13331">
    <property type="entry name" value="PH_Avo1"/>
    <property type="match status" value="1"/>
</dbReference>
<dbReference type="FunFam" id="2.30.29.30:FF:000585">
    <property type="entry name" value="target of rapamycin complex 2 subunit MAPKAP1 isoform X3"/>
    <property type="match status" value="1"/>
</dbReference>
<dbReference type="Gene3D" id="2.30.29.30">
    <property type="entry name" value="Pleckstrin-homology domain (PH domain)/Phosphotyrosine-binding domain (PTB)"/>
    <property type="match status" value="1"/>
</dbReference>
<dbReference type="InterPro" id="IPR031567">
    <property type="entry name" value="CRIM_dom"/>
</dbReference>
<dbReference type="InterPro" id="IPR011993">
    <property type="entry name" value="PH-like_dom_sf"/>
</dbReference>
<dbReference type="InterPro" id="IPR008828">
    <property type="entry name" value="Sin1/Avo1"/>
</dbReference>
<dbReference type="InterPro" id="IPR032679">
    <property type="entry name" value="Sin1_N"/>
</dbReference>
<dbReference type="InterPro" id="IPR031313">
    <property type="entry name" value="Sin1_PH_dom"/>
</dbReference>
<dbReference type="PANTHER" id="PTHR13335">
    <property type="entry name" value="TARGET OF RAPAMYCIN COMPLEX 2 SUBUNIT MAPKAP1"/>
    <property type="match status" value="1"/>
</dbReference>
<dbReference type="PANTHER" id="PTHR13335:SF1">
    <property type="entry name" value="TARGET OF RAPAMYCIN COMPLEX 2 SUBUNIT MAPKAP1"/>
    <property type="match status" value="1"/>
</dbReference>
<dbReference type="Pfam" id="PF16978">
    <property type="entry name" value="CRIM"/>
    <property type="match status" value="1"/>
</dbReference>
<dbReference type="Pfam" id="PF25322">
    <property type="entry name" value="RBD_SIN1"/>
    <property type="match status" value="1"/>
</dbReference>
<dbReference type="Pfam" id="PF05422">
    <property type="entry name" value="SIN1"/>
    <property type="match status" value="1"/>
</dbReference>
<dbReference type="Pfam" id="PF16979">
    <property type="entry name" value="SIN1_PH"/>
    <property type="match status" value="1"/>
</dbReference>
<gene>
    <name type="primary">mapkap1</name>
    <name type="synonym">sin1</name>
</gene>
<evidence type="ECO:0000250" key="1">
    <source>
        <dbReference type="UniProtKB" id="Q8BKH7"/>
    </source>
</evidence>
<evidence type="ECO:0000250" key="2">
    <source>
        <dbReference type="UniProtKB" id="Q9BPZ7"/>
    </source>
</evidence>
<evidence type="ECO:0000255" key="3"/>
<evidence type="ECO:0000256" key="4">
    <source>
        <dbReference type="SAM" id="MobiDB-lite"/>
    </source>
</evidence>
<evidence type="ECO:0000305" key="5"/>
<name>SIN1_XENTR</name>
<accession>A4IIM3</accession>
<reference key="1">
    <citation type="submission" date="2007-03" db="EMBL/GenBank/DDBJ databases">
        <authorList>
            <consortium name="NIH - Xenopus Gene Collection (XGC) project"/>
        </authorList>
    </citation>
    <scope>NUCLEOTIDE SEQUENCE [LARGE SCALE MRNA]</scope>
    <source>
        <tissue>Brain</tissue>
    </source>
</reference>
<proteinExistence type="evidence at transcript level"/>
<organism>
    <name type="scientific">Xenopus tropicalis</name>
    <name type="common">Western clawed frog</name>
    <name type="synonym">Silurana tropicalis</name>
    <dbReference type="NCBI Taxonomy" id="8364"/>
    <lineage>
        <taxon>Eukaryota</taxon>
        <taxon>Metazoa</taxon>
        <taxon>Chordata</taxon>
        <taxon>Craniata</taxon>
        <taxon>Vertebrata</taxon>
        <taxon>Euteleostomi</taxon>
        <taxon>Amphibia</taxon>
        <taxon>Batrachia</taxon>
        <taxon>Anura</taxon>
        <taxon>Pipoidea</taxon>
        <taxon>Pipidae</taxon>
        <taxon>Xenopodinae</taxon>
        <taxon>Xenopus</taxon>
        <taxon>Silurana</taxon>
    </lineage>
</organism>
<feature type="chain" id="PRO_0000331442" description="Target of rapamycin complex 2 subunit MAPKAP1">
    <location>
        <begin position="1"/>
        <end position="520"/>
    </location>
</feature>
<feature type="domain" description="CRIM" evidence="3">
    <location>
        <begin position="139"/>
        <end position="267"/>
    </location>
</feature>
<feature type="domain" description="SIN1-type PH" evidence="3">
    <location>
        <begin position="382"/>
        <end position="487"/>
    </location>
</feature>
<feature type="region of interest" description="SIN1-type RBD" evidence="3">
    <location>
        <begin position="279"/>
        <end position="353"/>
    </location>
</feature>
<feature type="region of interest" description="Disordered" evidence="4">
    <location>
        <begin position="310"/>
        <end position="333"/>
    </location>
</feature>
<feature type="binding site" evidence="2">
    <location>
        <position position="393"/>
    </location>
    <ligand>
        <name>a 1,2-diacyl-sn-glycero-3-phospho-(1D-myo-inositol-3,4,5-trisphosphate)</name>
        <dbReference type="ChEBI" id="CHEBI:57836"/>
    </ligand>
</feature>
<feature type="binding site" evidence="2">
    <location>
        <position position="428"/>
    </location>
    <ligand>
        <name>a 1,2-diacyl-sn-glycero-3-phospho-(1D-myo-inositol-3,4,5-trisphosphate)</name>
        <dbReference type="ChEBI" id="CHEBI:57836"/>
    </ligand>
</feature>
<feature type="binding site" evidence="2">
    <location>
        <position position="464"/>
    </location>
    <ligand>
        <name>a 1,2-diacyl-sn-glycero-3-phospho-(1D-myo-inositol-3,4,5-trisphosphate)</name>
        <dbReference type="ChEBI" id="CHEBI:57836"/>
    </ligand>
</feature>
<protein>
    <recommendedName>
        <fullName>Target of rapamycin complex 2 subunit MAPKAP1</fullName>
        <shortName>TORC2 subunit MAPKAP1</shortName>
    </recommendedName>
    <alternativeName>
        <fullName>Mitogen-activated protein kinase 2-associated protein 1</fullName>
    </alternativeName>
    <alternativeName>
        <fullName>Stress-activated map kinase-interacting protein 1</fullName>
        <shortName>SAPK-interacting protein 1</shortName>
    </alternativeName>
</protein>
<comment type="function">
    <text evidence="2">Component of the mechanistic target of rapamycin complex 2 (mTORC2), which transduces signals from growth factors to pathways involved in proliferation, cytoskeletal organization, lipogenesis and anabolic output. In response to growth factors, mTORC2 phosphorylates and activates AGC protein kinase family members, including AKT (AKT1, AKT2 and AKT3), PKC (PRKCA, PRKCB and PRKCE) and SGK1. In contrast to mTORC1, mTORC2 is nutrient-insensitive. Within the mTORC2 complex, MAPKAP1/SIN1 acts as a substrate adapter which recognizes and binds AGC protein kinase family members for phosphorylation by MTOR.</text>
</comment>
<comment type="activity regulation">
    <text evidence="2">Phosphatidylinositol 3,4,5-trisphosphate (PI(3,4,5)P3) promotes MTOR activation by relieving MAPKAP1/SIN1-mediated inhibition of MTOR that takes place in absence of PI(3,4,5)P3.</text>
</comment>
<comment type="subunit">
    <text evidence="2">Component of the mechanistic target of rapamycin complex 2 (mTORC2), consisting in two heterotretramers composed of MTOR, MLST8, RICTOR and MAPKAP1/SIN1. Contrary to mTORC1, mTORC2 does not bind to and is not sensitive to FKBP12-rapamycin.</text>
</comment>
<comment type="subcellular location">
    <subcellularLocation>
        <location evidence="2">Cell membrane</location>
        <topology evidence="2">Peripheral membrane protein</topology>
    </subcellularLocation>
    <subcellularLocation>
        <location evidence="2">Endoplasmic reticulum membrane</location>
        <topology evidence="2">Peripheral membrane protein</topology>
    </subcellularLocation>
    <subcellularLocation>
        <location evidence="2">Early endosome membrane</location>
        <topology evidence="2">Peripheral membrane protein</topology>
    </subcellularLocation>
    <subcellularLocation>
        <location evidence="2">Late endosome membrane</location>
        <topology evidence="2">Peripheral membrane protein</topology>
    </subcellularLocation>
    <subcellularLocation>
        <location evidence="2">Lysosome membrane</location>
        <topology evidence="2">Peripheral membrane protein</topology>
    </subcellularLocation>
    <subcellularLocation>
        <location evidence="2">Golgi apparatus membrane</location>
        <topology evidence="2">Peripheral membrane protein</topology>
    </subcellularLocation>
    <subcellularLocation>
        <location evidence="2">Mitochondrion outer membrane</location>
        <topology evidence="2">Peripheral membrane protein</topology>
    </subcellularLocation>
    <subcellularLocation>
        <location evidence="1">Cytoplasm</location>
        <location evidence="1">Perinuclear region</location>
    </subcellularLocation>
    <subcellularLocation>
        <location evidence="2">Nucleus</location>
    </subcellularLocation>
    <text evidence="2">The mTORC2 complex localizes to membranes: mTORC2 is active at the plasma membrane, endoplasmic reticulum membrane, lysosomes and perinuclear region.</text>
</comment>
<comment type="domain">
    <text evidence="2">The CRIM domain forms a ubiquitin-like fold with a characteristic acidic loop, which recognizes and binds AGC protein kinase family members substrates.</text>
</comment>
<comment type="domain">
    <text evidence="2">The SIN1-type PH binds phosphatidylinositol 3,4,5-trisphosphate (PI(3,4,5)P3). It plays a dual role in mTORC2: in absence of PI(3,4,5)P3, it binds and inactivates MTOR. PI(3,4,5)P3-binding relieves the inhibition, leading to mTORC2 activation.</text>
</comment>
<comment type="similarity">
    <text evidence="5">Belongs to the SIN1 family.</text>
</comment>